<sequence length="720" mass="80601">MPSCCCLLGLGFPSPPSALRILRRRMASRAFQLRLNPLTGDSEWLVVEEEEEEDHHPTPPPKQLLATTSYLDMLNDSARNRAYRRAIEAAVTDPSSRVLDIGAGTGLLSMMAARALAAVGGETRGGSVSACESYLPMGKLMRRVLRANGMENRVKVFHKRSDELKVRDDLDSPADILVSEILDSELLGEGLIPTLQQAYDMLLAKNPKIVPYRATTYGQLVESTFLWKLHDLHNNEANAADGVWLTPGEMERIVSVKPQQHAMQCDALEDEIRLLSEPFKVFEFDFWKRPDSHREANIKIRTTRDGYVHAIISWWVLQLDSAGSIFYSTAPRWARQSSSEGPQRDMKDWCDHWKQCVWFMQGKGIPATEDQVLSLRARHNQTSISYQLNINDEACDRSSKGDHLTLLPERIALYGDKDWRSALINTIKNALTVKSSPTCVVADDSMFLALLISSMSPTSKVIAMYPGLRDKGAAYLRSVADANNFSIDQIQVIGKRASSITADDLKHKKVNLLVGEPFYLGSEGMLPWQNLRFWSVRTLLDSMLSEDAFIMPCKGILKLCAMSLPDLWRSRSSLKDVEGFDHSVVNETLGACGCLPGDQQGPCLPYYVWQCGYTKKLSKVYSLMDFNFSEPIHSCFGKTKIEFSHDGTCHGFAVWIDWVLDERKSVVLTTGPDNRYWKQGVQLFSKPVEVNPGKSVMHVEASFDPSTGEITFSSSSTTCS</sequence>
<gene>
    <name type="primary">PRMT7</name>
    <name type="ordered locus">Os06g0105500</name>
    <name type="ordered locus">LOC_Os06g01640</name>
    <name type="ORF">OsJ_019028</name>
    <name type="ORF">OsJ_19828</name>
    <name type="ORF">P0644B06.25</name>
</gene>
<keyword id="KW-0489">Methyltransferase</keyword>
<keyword id="KW-1185">Reference proteome</keyword>
<keyword id="KW-0677">Repeat</keyword>
<keyword id="KW-0949">S-adenosyl-L-methionine</keyword>
<keyword id="KW-0808">Transferase</keyword>
<accession>Q5VS72</accession>
<accession>A0A0P0WRB2</accession>
<accession>A3B7K6</accession>
<accession>B9FR35</accession>
<comment type="function">
    <text evidence="1">Arginine methyltransferase that can both catalyze the formation of omega-N monomethylarginine (MMA) and symmetrical dimethylarginine (sDMA).</text>
</comment>
<comment type="similarity">
    <text evidence="2">Belongs to the class I-like SAM-binding methyltransferase superfamily. Protein arginine N-methyltransferase family. PRMT7 subfamily.</text>
</comment>
<comment type="sequence caution" evidence="3">
    <conflict type="frameshift">
        <sequence resource="EMBL" id="AK099594"/>
    </conflict>
</comment>
<comment type="sequence caution" evidence="3">
    <conflict type="erroneous gene model prediction">
        <sequence resource="EMBL-CDS" id="EEE64946"/>
    </conflict>
</comment>
<dbReference type="EC" id="2.1.1.-"/>
<dbReference type="EMBL" id="AP001129">
    <property type="protein sequence ID" value="BAD67703.1"/>
    <property type="molecule type" value="Genomic_DNA"/>
</dbReference>
<dbReference type="EMBL" id="AP008212">
    <property type="protein sequence ID" value="BAF18470.1"/>
    <property type="molecule type" value="Genomic_DNA"/>
</dbReference>
<dbReference type="EMBL" id="AP014962">
    <property type="protein sequence ID" value="BAS95742.1"/>
    <property type="molecule type" value="Genomic_DNA"/>
</dbReference>
<dbReference type="EMBL" id="CM000143">
    <property type="protein sequence ID" value="EEE64946.1"/>
    <property type="status" value="ALT_SEQ"/>
    <property type="molecule type" value="Genomic_DNA"/>
</dbReference>
<dbReference type="EMBL" id="AK099594">
    <property type="status" value="NOT_ANNOTATED_CDS"/>
    <property type="molecule type" value="mRNA"/>
</dbReference>
<dbReference type="RefSeq" id="XP_015641005.1">
    <property type="nucleotide sequence ID" value="XM_015785519.1"/>
</dbReference>
<dbReference type="SMR" id="Q5VS72"/>
<dbReference type="FunCoup" id="Q5VS72">
    <property type="interactions" value="1549"/>
</dbReference>
<dbReference type="STRING" id="39947.Q5VS72"/>
<dbReference type="PaxDb" id="39947-Q5VS72"/>
<dbReference type="EnsemblPlants" id="Os06t0105500-01">
    <property type="protein sequence ID" value="Os06t0105500-01"/>
    <property type="gene ID" value="Os06g0105500"/>
</dbReference>
<dbReference type="Gramene" id="Os06t0105500-01">
    <property type="protein sequence ID" value="Os06t0105500-01"/>
    <property type="gene ID" value="Os06g0105500"/>
</dbReference>
<dbReference type="KEGG" id="dosa:Os06g0105500"/>
<dbReference type="eggNOG" id="KOG1501">
    <property type="taxonomic scope" value="Eukaryota"/>
</dbReference>
<dbReference type="HOGENOM" id="CLU_015180_1_0_1"/>
<dbReference type="InParanoid" id="Q5VS72"/>
<dbReference type="OMA" id="CHHDEYS"/>
<dbReference type="OrthoDB" id="412876at2759"/>
<dbReference type="Proteomes" id="UP000000763">
    <property type="component" value="Chromosome 6"/>
</dbReference>
<dbReference type="Proteomes" id="UP000007752">
    <property type="component" value="Chromosome 6"/>
</dbReference>
<dbReference type="Proteomes" id="UP000059680">
    <property type="component" value="Chromosome 6"/>
</dbReference>
<dbReference type="GO" id="GO:0042054">
    <property type="term" value="F:histone methyltransferase activity"/>
    <property type="evidence" value="ECO:0000318"/>
    <property type="project" value="GO_Central"/>
</dbReference>
<dbReference type="GO" id="GO:0016274">
    <property type="term" value="F:protein-arginine N-methyltransferase activity"/>
    <property type="evidence" value="ECO:0000318"/>
    <property type="project" value="GO_Central"/>
</dbReference>
<dbReference type="GO" id="GO:0006338">
    <property type="term" value="P:chromatin remodeling"/>
    <property type="evidence" value="ECO:0000318"/>
    <property type="project" value="GO_Central"/>
</dbReference>
<dbReference type="GO" id="GO:0032259">
    <property type="term" value="P:methylation"/>
    <property type="evidence" value="ECO:0007669"/>
    <property type="project" value="UniProtKB-KW"/>
</dbReference>
<dbReference type="GO" id="GO:0006355">
    <property type="term" value="P:regulation of DNA-templated transcription"/>
    <property type="evidence" value="ECO:0000318"/>
    <property type="project" value="GO_Central"/>
</dbReference>
<dbReference type="CDD" id="cd02440">
    <property type="entry name" value="AdoMet_MTases"/>
    <property type="match status" value="1"/>
</dbReference>
<dbReference type="FunFam" id="3.40.50.150:FF:000167">
    <property type="entry name" value="Protein arginine N-methyltransferase"/>
    <property type="match status" value="1"/>
</dbReference>
<dbReference type="FunFam" id="2.70.160.11:FF:000013">
    <property type="entry name" value="Protein arginine N-methyltransferase 1.6"/>
    <property type="match status" value="1"/>
</dbReference>
<dbReference type="FunFam" id="2.70.160.11:FF:000017">
    <property type="entry name" value="Protein arginine N-methyltransferase 1.6"/>
    <property type="match status" value="1"/>
</dbReference>
<dbReference type="FunFam" id="3.40.50.150:FF:000070">
    <property type="entry name" value="Protein arginine N-methyltransferase 7"/>
    <property type="match status" value="1"/>
</dbReference>
<dbReference type="Gene3D" id="2.70.160.11">
    <property type="entry name" value="Hnrnp arginine n-methyltransferase1"/>
    <property type="match status" value="2"/>
</dbReference>
<dbReference type="Gene3D" id="3.40.50.150">
    <property type="entry name" value="Vaccinia Virus protein VP39"/>
    <property type="match status" value="2"/>
</dbReference>
<dbReference type="InterPro" id="IPR025799">
    <property type="entry name" value="Arg_MeTrfase"/>
</dbReference>
<dbReference type="InterPro" id="IPR014644">
    <property type="entry name" value="MeTrfase_PRMT7"/>
</dbReference>
<dbReference type="InterPro" id="IPR055135">
    <property type="entry name" value="PRMT_dom"/>
</dbReference>
<dbReference type="InterPro" id="IPR029063">
    <property type="entry name" value="SAM-dependent_MTases_sf"/>
</dbReference>
<dbReference type="PANTHER" id="PTHR11006">
    <property type="entry name" value="PROTEIN ARGININE N-METHYLTRANSFERASE"/>
    <property type="match status" value="1"/>
</dbReference>
<dbReference type="PANTHER" id="PTHR11006:SF4">
    <property type="entry name" value="PROTEIN ARGININE N-METHYLTRANSFERASE 7"/>
    <property type="match status" value="1"/>
</dbReference>
<dbReference type="Pfam" id="PF22528">
    <property type="entry name" value="PRMT_C"/>
    <property type="match status" value="2"/>
</dbReference>
<dbReference type="PIRSF" id="PIRSF036946">
    <property type="entry name" value="Arg_N-mtase"/>
    <property type="match status" value="1"/>
</dbReference>
<dbReference type="SUPFAM" id="SSF53335">
    <property type="entry name" value="S-adenosyl-L-methionine-dependent methyltransferases"/>
    <property type="match status" value="2"/>
</dbReference>
<dbReference type="PROSITE" id="PS51678">
    <property type="entry name" value="SAM_MT_PRMT"/>
    <property type="match status" value="2"/>
</dbReference>
<feature type="chain" id="PRO_0000294003" description="Protein arginine N-methyltransferase 7">
    <location>
        <begin position="1"/>
        <end position="720"/>
    </location>
</feature>
<feature type="domain" description="SAM-dependent MTase PRMT-type 1" evidence="2">
    <location>
        <begin position="54"/>
        <end position="385"/>
    </location>
</feature>
<feature type="domain" description="SAM-dependent MTase PRMT-type 2" evidence="2">
    <location>
        <begin position="387"/>
        <end position="720"/>
    </location>
</feature>
<feature type="active site" evidence="1">
    <location>
        <position position="180"/>
    </location>
</feature>
<feature type="active site" evidence="1">
    <location>
        <position position="189"/>
    </location>
</feature>
<protein>
    <recommendedName>
        <fullName>Protein arginine N-methyltransferase 7</fullName>
        <ecNumber>2.1.1.-</ecNumber>
    </recommendedName>
</protein>
<proteinExistence type="evidence at transcript level"/>
<organism>
    <name type="scientific">Oryza sativa subsp. japonica</name>
    <name type="common">Rice</name>
    <dbReference type="NCBI Taxonomy" id="39947"/>
    <lineage>
        <taxon>Eukaryota</taxon>
        <taxon>Viridiplantae</taxon>
        <taxon>Streptophyta</taxon>
        <taxon>Embryophyta</taxon>
        <taxon>Tracheophyta</taxon>
        <taxon>Spermatophyta</taxon>
        <taxon>Magnoliopsida</taxon>
        <taxon>Liliopsida</taxon>
        <taxon>Poales</taxon>
        <taxon>Poaceae</taxon>
        <taxon>BOP clade</taxon>
        <taxon>Oryzoideae</taxon>
        <taxon>Oryzeae</taxon>
        <taxon>Oryzinae</taxon>
        <taxon>Oryza</taxon>
        <taxon>Oryza sativa</taxon>
    </lineage>
</organism>
<name>ANM7_ORYSJ</name>
<reference key="1">
    <citation type="journal article" date="2005" name="Nature">
        <title>The map-based sequence of the rice genome.</title>
        <authorList>
            <consortium name="International rice genome sequencing project (IRGSP)"/>
        </authorList>
    </citation>
    <scope>NUCLEOTIDE SEQUENCE [LARGE SCALE GENOMIC DNA]</scope>
    <source>
        <strain>cv. Nipponbare</strain>
    </source>
</reference>
<reference key="2">
    <citation type="journal article" date="2008" name="Nucleic Acids Res.">
        <title>The rice annotation project database (RAP-DB): 2008 update.</title>
        <authorList>
            <consortium name="The rice annotation project (RAP)"/>
        </authorList>
    </citation>
    <scope>GENOME REANNOTATION</scope>
    <source>
        <strain>cv. Nipponbare</strain>
    </source>
</reference>
<reference key="3">
    <citation type="journal article" date="2013" name="Rice">
        <title>Improvement of the Oryza sativa Nipponbare reference genome using next generation sequence and optical map data.</title>
        <authorList>
            <person name="Kawahara Y."/>
            <person name="de la Bastide M."/>
            <person name="Hamilton J.P."/>
            <person name="Kanamori H."/>
            <person name="McCombie W.R."/>
            <person name="Ouyang S."/>
            <person name="Schwartz D.C."/>
            <person name="Tanaka T."/>
            <person name="Wu J."/>
            <person name="Zhou S."/>
            <person name="Childs K.L."/>
            <person name="Davidson R.M."/>
            <person name="Lin H."/>
            <person name="Quesada-Ocampo L."/>
            <person name="Vaillancourt B."/>
            <person name="Sakai H."/>
            <person name="Lee S.S."/>
            <person name="Kim J."/>
            <person name="Numa H."/>
            <person name="Itoh T."/>
            <person name="Buell C.R."/>
            <person name="Matsumoto T."/>
        </authorList>
    </citation>
    <scope>GENOME REANNOTATION</scope>
    <source>
        <strain>cv. Nipponbare</strain>
    </source>
</reference>
<reference key="4">
    <citation type="journal article" date="2005" name="PLoS Biol.">
        <title>The genomes of Oryza sativa: a history of duplications.</title>
        <authorList>
            <person name="Yu J."/>
            <person name="Wang J."/>
            <person name="Lin W."/>
            <person name="Li S."/>
            <person name="Li H."/>
            <person name="Zhou J."/>
            <person name="Ni P."/>
            <person name="Dong W."/>
            <person name="Hu S."/>
            <person name="Zeng C."/>
            <person name="Zhang J."/>
            <person name="Zhang Y."/>
            <person name="Li R."/>
            <person name="Xu Z."/>
            <person name="Li S."/>
            <person name="Li X."/>
            <person name="Zheng H."/>
            <person name="Cong L."/>
            <person name="Lin L."/>
            <person name="Yin J."/>
            <person name="Geng J."/>
            <person name="Li G."/>
            <person name="Shi J."/>
            <person name="Liu J."/>
            <person name="Lv H."/>
            <person name="Li J."/>
            <person name="Wang J."/>
            <person name="Deng Y."/>
            <person name="Ran L."/>
            <person name="Shi X."/>
            <person name="Wang X."/>
            <person name="Wu Q."/>
            <person name="Li C."/>
            <person name="Ren X."/>
            <person name="Wang J."/>
            <person name="Wang X."/>
            <person name="Li D."/>
            <person name="Liu D."/>
            <person name="Zhang X."/>
            <person name="Ji Z."/>
            <person name="Zhao W."/>
            <person name="Sun Y."/>
            <person name="Zhang Z."/>
            <person name="Bao J."/>
            <person name="Han Y."/>
            <person name="Dong L."/>
            <person name="Ji J."/>
            <person name="Chen P."/>
            <person name="Wu S."/>
            <person name="Liu J."/>
            <person name="Xiao Y."/>
            <person name="Bu D."/>
            <person name="Tan J."/>
            <person name="Yang L."/>
            <person name="Ye C."/>
            <person name="Zhang J."/>
            <person name="Xu J."/>
            <person name="Zhou Y."/>
            <person name="Yu Y."/>
            <person name="Zhang B."/>
            <person name="Zhuang S."/>
            <person name="Wei H."/>
            <person name="Liu B."/>
            <person name="Lei M."/>
            <person name="Yu H."/>
            <person name="Li Y."/>
            <person name="Xu H."/>
            <person name="Wei S."/>
            <person name="He X."/>
            <person name="Fang L."/>
            <person name="Zhang Z."/>
            <person name="Zhang Y."/>
            <person name="Huang X."/>
            <person name="Su Z."/>
            <person name="Tong W."/>
            <person name="Li J."/>
            <person name="Tong Z."/>
            <person name="Li S."/>
            <person name="Ye J."/>
            <person name="Wang L."/>
            <person name="Fang L."/>
            <person name="Lei T."/>
            <person name="Chen C.-S."/>
            <person name="Chen H.-C."/>
            <person name="Xu Z."/>
            <person name="Li H."/>
            <person name="Huang H."/>
            <person name="Zhang F."/>
            <person name="Xu H."/>
            <person name="Li N."/>
            <person name="Zhao C."/>
            <person name="Li S."/>
            <person name="Dong L."/>
            <person name="Huang Y."/>
            <person name="Li L."/>
            <person name="Xi Y."/>
            <person name="Qi Q."/>
            <person name="Li W."/>
            <person name="Zhang B."/>
            <person name="Hu W."/>
            <person name="Zhang Y."/>
            <person name="Tian X."/>
            <person name="Jiao Y."/>
            <person name="Liang X."/>
            <person name="Jin J."/>
            <person name="Gao L."/>
            <person name="Zheng W."/>
            <person name="Hao B."/>
            <person name="Liu S.-M."/>
            <person name="Wang W."/>
            <person name="Yuan L."/>
            <person name="Cao M."/>
            <person name="McDermott J."/>
            <person name="Samudrala R."/>
            <person name="Wang J."/>
            <person name="Wong G.K.-S."/>
            <person name="Yang H."/>
        </authorList>
    </citation>
    <scope>NUCLEOTIDE SEQUENCE [LARGE SCALE GENOMIC DNA]</scope>
    <source>
        <strain>cv. Nipponbare</strain>
    </source>
</reference>
<reference key="5">
    <citation type="journal article" date="2003" name="Science">
        <title>Collection, mapping, and annotation of over 28,000 cDNA clones from japonica rice.</title>
        <authorList>
            <consortium name="The rice full-length cDNA consortium"/>
        </authorList>
    </citation>
    <scope>NUCLEOTIDE SEQUENCE [LARGE SCALE MRNA]</scope>
    <source>
        <strain>cv. Nipponbare</strain>
    </source>
</reference>
<evidence type="ECO:0000250" key="1"/>
<evidence type="ECO:0000255" key="2">
    <source>
        <dbReference type="PROSITE-ProRule" id="PRU01015"/>
    </source>
</evidence>
<evidence type="ECO:0000305" key="3"/>